<dbReference type="EMBL" id="L33835">
    <property type="status" value="NOT_ANNOTATED_CDS"/>
    <property type="molecule type" value="Genomic_DNA"/>
</dbReference>
<dbReference type="EMBL" id="U28371">
    <property type="status" value="NOT_ANNOTATED_CDS"/>
    <property type="molecule type" value="Genomic_DNA"/>
</dbReference>
<dbReference type="EMBL" id="AF479985">
    <property type="protein sequence ID" value="AAL79298.1"/>
    <property type="molecule type" value="Genomic_DNA"/>
</dbReference>
<dbReference type="MINT" id="Q8TGK8"/>
<dbReference type="iPTMnet" id="Q8TGK8"/>
<dbReference type="PaxDb" id="4932-YPR160C-A"/>
<dbReference type="EnsemblFungi" id="YPR160C-A_mRNA">
    <property type="protein sequence ID" value="YPR160C-A"/>
    <property type="gene ID" value="YPR160C-A"/>
</dbReference>
<dbReference type="AGR" id="SGD:S000028726"/>
<dbReference type="SGD" id="S000028726">
    <property type="gene designation" value="YPR160C-A"/>
</dbReference>
<dbReference type="HOGENOM" id="CLU_2387869_0_0_1"/>
<accession>Q8TGK8</accession>
<protein>
    <recommendedName>
        <fullName>Putative uncharacterized protein YPR160C-A</fullName>
    </recommendedName>
</protein>
<sequence>MVVLINSECNSATPLTLCEPTIAKKAILICLSGEFSSMMDIRDKRSTSLGNFLATSCKKNQLISYIISKCLGSKWPKRPTGHFSRASCITVWLV</sequence>
<comment type="miscellaneous">
    <text evidence="1">Completely overlaps GPH1.</text>
</comment>
<comment type="caution">
    <text evidence="2">Product of a dubious gene prediction unlikely to encode a functional protein. Because of that it is not part of the S.cerevisiae S288c complete/reference proteome set.</text>
</comment>
<gene>
    <name type="ordered locus">YPR160C-A</name>
</gene>
<evidence type="ECO:0000305" key="1"/>
<evidence type="ECO:0000305" key="2">
    <source>
    </source>
</evidence>
<feature type="chain" id="PRO_0000299832" description="Putative uncharacterized protein YPR160C-A">
    <location>
        <begin position="1"/>
        <end position="94"/>
    </location>
</feature>
<feature type="sequence conflict" description="In Ref. 1; L33835." evidence="1" ref="1">
    <original>A</original>
    <variation>T</variation>
    <location>
        <position position="12"/>
    </location>
</feature>
<feature type="sequence conflict" description="In Ref. 1; L33835." evidence="1" ref="1">
    <original>PT</original>
    <variation>RR</variation>
    <location>
        <begin position="79"/>
        <end position="80"/>
    </location>
</feature>
<proteinExistence type="uncertain"/>
<reference key="1">
    <citation type="journal article" date="1994" name="Yeast">
        <title>DNA sequence analysis of a 10.4 kbp region on the right arm of yeast chromosome XVI positions GPH1 and SGV1 adjacent to KRE6, and identifies two novel tRNA genes.</title>
        <authorList>
            <person name="Roemer T.D."/>
            <person name="Fortin N."/>
            <person name="Bussey H."/>
        </authorList>
    </citation>
    <scope>NUCLEOTIDE SEQUENCE [GENOMIC DNA]</scope>
</reference>
<reference key="2">
    <citation type="journal article" date="1997" name="Nature">
        <title>The nucleotide sequence of Saccharomyces cerevisiae chromosome XVI.</title>
        <authorList>
            <person name="Bussey H."/>
            <person name="Storms R.K."/>
            <person name="Ahmed A."/>
            <person name="Albermann K."/>
            <person name="Allen E."/>
            <person name="Ansorge W."/>
            <person name="Araujo R."/>
            <person name="Aparicio A."/>
            <person name="Barrell B.G."/>
            <person name="Badcock K."/>
            <person name="Benes V."/>
            <person name="Botstein D."/>
            <person name="Bowman S."/>
            <person name="Brueckner M."/>
            <person name="Carpenter J."/>
            <person name="Cherry J.M."/>
            <person name="Chung E."/>
            <person name="Churcher C.M."/>
            <person name="Coster F."/>
            <person name="Davis K."/>
            <person name="Davis R.W."/>
            <person name="Dietrich F.S."/>
            <person name="Delius H."/>
            <person name="DiPaolo T."/>
            <person name="Dubois E."/>
            <person name="Duesterhoeft A."/>
            <person name="Duncan M."/>
            <person name="Floeth M."/>
            <person name="Fortin N."/>
            <person name="Friesen J.D."/>
            <person name="Fritz C."/>
            <person name="Goffeau A."/>
            <person name="Hall J."/>
            <person name="Hebling U."/>
            <person name="Heumann K."/>
            <person name="Hilbert H."/>
            <person name="Hillier L.W."/>
            <person name="Hunicke-Smith S."/>
            <person name="Hyman R.W."/>
            <person name="Johnston M."/>
            <person name="Kalman S."/>
            <person name="Kleine K."/>
            <person name="Komp C."/>
            <person name="Kurdi O."/>
            <person name="Lashkari D."/>
            <person name="Lew H."/>
            <person name="Lin A."/>
            <person name="Lin D."/>
            <person name="Louis E.J."/>
            <person name="Marathe R."/>
            <person name="Messenguy F."/>
            <person name="Mewes H.-W."/>
            <person name="Mirtipati S."/>
            <person name="Moestl D."/>
            <person name="Mueller-Auer S."/>
            <person name="Namath A."/>
            <person name="Nentwich U."/>
            <person name="Oefner P."/>
            <person name="Pearson D."/>
            <person name="Petel F.X."/>
            <person name="Pohl T.M."/>
            <person name="Purnelle B."/>
            <person name="Rajandream M.A."/>
            <person name="Rechmann S."/>
            <person name="Rieger M."/>
            <person name="Riles L."/>
            <person name="Roberts D."/>
            <person name="Schaefer M."/>
            <person name="Scharfe M."/>
            <person name="Scherens B."/>
            <person name="Schramm S."/>
            <person name="Schroeder M."/>
            <person name="Sdicu A.-M."/>
            <person name="Tettelin H."/>
            <person name="Urrestarazu L.A."/>
            <person name="Ushinsky S."/>
            <person name="Vierendeels F."/>
            <person name="Vissers S."/>
            <person name="Voss H."/>
            <person name="Walsh S.V."/>
            <person name="Wambutt R."/>
            <person name="Wang Y."/>
            <person name="Wedler E."/>
            <person name="Wedler H."/>
            <person name="Winnett E."/>
            <person name="Zhong W.-W."/>
            <person name="Zollner A."/>
            <person name="Vo D.H."/>
            <person name="Hani J."/>
        </authorList>
    </citation>
    <scope>NUCLEOTIDE SEQUENCE [LARGE SCALE GENOMIC DNA]</scope>
    <source>
        <strain>ATCC 204508 / S288c</strain>
    </source>
</reference>
<reference key="3">
    <citation type="journal article" date="2014" name="G3 (Bethesda)">
        <title>The reference genome sequence of Saccharomyces cerevisiae: Then and now.</title>
        <authorList>
            <person name="Engel S.R."/>
            <person name="Dietrich F.S."/>
            <person name="Fisk D.G."/>
            <person name="Binkley G."/>
            <person name="Balakrishnan R."/>
            <person name="Costanzo M.C."/>
            <person name="Dwight S.S."/>
            <person name="Hitz B.C."/>
            <person name="Karra K."/>
            <person name="Nash R.S."/>
            <person name="Weng S."/>
            <person name="Wong E.D."/>
            <person name="Lloyd P."/>
            <person name="Skrzypek M.S."/>
            <person name="Miyasato S.R."/>
            <person name="Simison M."/>
            <person name="Cherry J.M."/>
        </authorList>
    </citation>
    <scope>GENOME REANNOTATION</scope>
    <source>
        <strain>ATCC 204508 / S288c</strain>
    </source>
</reference>
<reference key="4">
    <citation type="journal article" date="2002" name="Nat. Biotechnol.">
        <title>An integrated approach for finding overlooked genes in yeast.</title>
        <authorList>
            <person name="Kumar A."/>
            <person name="Harrison P.M."/>
            <person name="Cheung K.-H."/>
            <person name="Lan N."/>
            <person name="Echols N."/>
            <person name="Bertone P."/>
            <person name="Miller P."/>
            <person name="Gerstein M.B."/>
            <person name="Snyder M."/>
        </authorList>
    </citation>
    <scope>NUCLEOTIDE SEQUENCE [GENOMIC DNA]</scope>
</reference>
<organism>
    <name type="scientific">Saccharomyces cerevisiae (strain ATCC 204508 / S288c)</name>
    <name type="common">Baker's yeast</name>
    <dbReference type="NCBI Taxonomy" id="559292"/>
    <lineage>
        <taxon>Eukaryota</taxon>
        <taxon>Fungi</taxon>
        <taxon>Dikarya</taxon>
        <taxon>Ascomycota</taxon>
        <taxon>Saccharomycotina</taxon>
        <taxon>Saccharomycetes</taxon>
        <taxon>Saccharomycetales</taxon>
        <taxon>Saccharomycetaceae</taxon>
        <taxon>Saccharomyces</taxon>
    </lineage>
</organism>
<name>YP160_YEAST</name>